<reference key="1">
    <citation type="submission" date="2003-08" db="EMBL/GenBank/DDBJ databases">
        <title>Sequence and structure of zinc finger protein 183 homologs.</title>
        <authorList>
            <person name="Huang C.-H."/>
            <person name="Chen Y."/>
        </authorList>
    </citation>
    <scope>NUCLEOTIDE SEQUENCE [MRNA]</scope>
    <source>
        <tissue>Kidney</tissue>
    </source>
</reference>
<reference key="2">
    <citation type="submission" date="2006-02" db="EMBL/GenBank/DDBJ databases">
        <authorList>
            <consortium name="NIH - Mammalian Gene Collection (MGC) project"/>
        </authorList>
    </citation>
    <scope>NUCLEOTIDE SEQUENCE [LARGE SCALE MRNA]</scope>
    <source>
        <strain>Hereford</strain>
        <tissue>Uterus</tissue>
    </source>
</reference>
<sequence length="343" mass="38849">MAEQLSPGKTTDQVCTFLFKKPGRKVAAGRRKRPICNQESGDSSSSSDEGNTVVRPEKKRAVHNPMIQKTRGSGKQKVAYGDLSSEEEEENKSESLGVVYKSTRSAKPVGPEDMGATAVYELDTEKERDAQAIFERSQKIQEELRGQEDDKIYRGINNYQKFMKPKDTSMGNASSGMVRKGPIRAPEHLRATVRWDYQPDICKDYKETGFCGFGDSCKFLHDRSDYKHGWQIERELDEGRYGVYEDENYEVGSDEEEIPFKCFICRQTFQNPVVTKCRHYFCESCALQHFRTTPRCYVCDQQTNGVFNPAKELIAKLEKHRAAEGGGASGFPEDPDEDPVPIT</sequence>
<comment type="function">
    <text evidence="1">Required for pre-mRNA splicing as component of the spliceosome. As a component of the minor spliceosome, involved in the splicing of U12-type introns in pre-mRNAs (By similarity). E3 ubiquitin-protein ligase that catalyzes the transfer of ubiquitin onto target proteins. Catalyzes polyubiquitination of SNRNP200/BRR2 with non-canonical 'Lys-63'-linked polyubiquitin chains. Plays a role in DNA repair via its role in the synthesis of 'Lys-63'-linked polyubiquitin chains that recruit ALKBH3 and the ASCC complex to sites of DNA damage by alkylating agents. Ubiquitinates CXCR4, leading to its degradation, and thereby contributes to the termination of CXCR4 signaling.</text>
</comment>
<comment type="catalytic activity">
    <reaction evidence="1">
        <text>S-ubiquitinyl-[E2 ubiquitin-conjugating enzyme]-L-cysteine + [acceptor protein]-L-lysine = [E2 ubiquitin-conjugating enzyme]-L-cysteine + N(6)-ubiquitinyl-[acceptor protein]-L-lysine.</text>
        <dbReference type="EC" id="2.3.2.27"/>
    </reaction>
</comment>
<comment type="pathway">
    <text evidence="1">Protein modification; protein ubiquitination.</text>
</comment>
<comment type="subunit">
    <text evidence="1">Component of pre-catalytic and catalytic spliceosome complexes. Interacts (via N-terminus) with the spliceosome subunit SNRNP200/BRR2. Component of the minor spliceosome. Within this complex, interacts with SCNM1 and CRIPT.</text>
</comment>
<comment type="subcellular location">
    <subcellularLocation>
        <location evidence="1">Nucleus</location>
    </subcellularLocation>
    <subcellularLocation>
        <location evidence="1">Nucleus speckle</location>
    </subcellularLocation>
    <text evidence="1">Colocalizes with ASCC2 in nuclear foci after DNA damage by alkylating agents. In the absence of DNA damage, colocalizes with the spliceosome components SNRNP200/BRR2 and PRPF8 in nuclear speckles.</text>
</comment>
<name>R113A_BOVIN</name>
<keyword id="KW-0007">Acetylation</keyword>
<keyword id="KW-0227">DNA damage</keyword>
<keyword id="KW-0234">DNA repair</keyword>
<keyword id="KW-0479">Metal-binding</keyword>
<keyword id="KW-0507">mRNA processing</keyword>
<keyword id="KW-0508">mRNA splicing</keyword>
<keyword id="KW-0539">Nucleus</keyword>
<keyword id="KW-0597">Phosphoprotein</keyword>
<keyword id="KW-1185">Reference proteome</keyword>
<keyword id="KW-0747">Spliceosome</keyword>
<keyword id="KW-0808">Transferase</keyword>
<keyword id="KW-0833">Ubl conjugation pathway</keyword>
<keyword id="KW-0862">Zinc</keyword>
<keyword id="KW-0863">Zinc-finger</keyword>
<dbReference type="EC" id="2.3.2.27" evidence="1"/>
<dbReference type="EMBL" id="AY363106">
    <property type="protein sequence ID" value="AAR97519.1"/>
    <property type="molecule type" value="mRNA"/>
</dbReference>
<dbReference type="EMBL" id="BC113255">
    <property type="protein sequence ID" value="AAI13256.1"/>
    <property type="molecule type" value="mRNA"/>
</dbReference>
<dbReference type="RefSeq" id="NP_001007808.1">
    <property type="nucleotide sequence ID" value="NM_001007807.1"/>
</dbReference>
<dbReference type="SMR" id="Q67ER4"/>
<dbReference type="FunCoup" id="Q67ER4">
    <property type="interactions" value="2232"/>
</dbReference>
<dbReference type="STRING" id="9913.ENSBTAP00000007927"/>
<dbReference type="PaxDb" id="9913-ENSBTAP00000007927"/>
<dbReference type="GeneID" id="493640"/>
<dbReference type="KEGG" id="bta:493640"/>
<dbReference type="CTD" id="7737"/>
<dbReference type="eggNOG" id="KOG1813">
    <property type="taxonomic scope" value="Eukaryota"/>
</dbReference>
<dbReference type="HOGENOM" id="CLU_050460_1_0_1"/>
<dbReference type="InParanoid" id="Q67ER4"/>
<dbReference type="OrthoDB" id="25761at2759"/>
<dbReference type="TreeFam" id="TF313469"/>
<dbReference type="UniPathway" id="UPA00143"/>
<dbReference type="Proteomes" id="UP000009136">
    <property type="component" value="Unplaced"/>
</dbReference>
<dbReference type="GO" id="GO:0016607">
    <property type="term" value="C:nuclear speck"/>
    <property type="evidence" value="ECO:0007669"/>
    <property type="project" value="UniProtKB-SubCell"/>
</dbReference>
<dbReference type="GO" id="GO:0005634">
    <property type="term" value="C:nucleus"/>
    <property type="evidence" value="ECO:0000250"/>
    <property type="project" value="UniProtKB"/>
</dbReference>
<dbReference type="GO" id="GO:0071005">
    <property type="term" value="C:U2-type precatalytic spliceosome"/>
    <property type="evidence" value="ECO:0000250"/>
    <property type="project" value="UniProtKB"/>
</dbReference>
<dbReference type="GO" id="GO:0005684">
    <property type="term" value="C:U2-type spliceosomal complex"/>
    <property type="evidence" value="ECO:0000318"/>
    <property type="project" value="GO_Central"/>
</dbReference>
<dbReference type="GO" id="GO:0061630">
    <property type="term" value="F:ubiquitin protein ligase activity"/>
    <property type="evidence" value="ECO:0000250"/>
    <property type="project" value="UniProtKB"/>
</dbReference>
<dbReference type="GO" id="GO:0008270">
    <property type="term" value="F:zinc ion binding"/>
    <property type="evidence" value="ECO:0007669"/>
    <property type="project" value="UniProtKB-KW"/>
</dbReference>
<dbReference type="GO" id="GO:0006281">
    <property type="term" value="P:DNA repair"/>
    <property type="evidence" value="ECO:0007669"/>
    <property type="project" value="UniProtKB-KW"/>
</dbReference>
<dbReference type="GO" id="GO:0000398">
    <property type="term" value="P:mRNA splicing, via spliceosome"/>
    <property type="evidence" value="ECO:0000250"/>
    <property type="project" value="UniProtKB"/>
</dbReference>
<dbReference type="GO" id="GO:0070100">
    <property type="term" value="P:negative regulation of chemokine-mediated signaling pathway"/>
    <property type="evidence" value="ECO:0000250"/>
    <property type="project" value="UniProtKB"/>
</dbReference>
<dbReference type="GO" id="GO:0016567">
    <property type="term" value="P:protein ubiquitination"/>
    <property type="evidence" value="ECO:0000250"/>
    <property type="project" value="UniProtKB"/>
</dbReference>
<dbReference type="GO" id="GO:0034247">
    <property type="term" value="P:snoRNA splicing"/>
    <property type="evidence" value="ECO:0000318"/>
    <property type="project" value="GO_Central"/>
</dbReference>
<dbReference type="CDD" id="cd16539">
    <property type="entry name" value="RING-HC_RNF113A_B"/>
    <property type="match status" value="1"/>
</dbReference>
<dbReference type="FunFam" id="3.30.40.10:FF:000045">
    <property type="entry name" value="RING finger protein 113A"/>
    <property type="match status" value="1"/>
</dbReference>
<dbReference type="Gene3D" id="3.30.40.10">
    <property type="entry name" value="Zinc/RING finger domain, C3HC4 (zinc finger)"/>
    <property type="match status" value="1"/>
</dbReference>
<dbReference type="InterPro" id="IPR039971">
    <property type="entry name" value="CWC24-like"/>
</dbReference>
<dbReference type="InterPro" id="IPR000571">
    <property type="entry name" value="Znf_CCCH"/>
</dbReference>
<dbReference type="InterPro" id="IPR036855">
    <property type="entry name" value="Znf_CCCH_sf"/>
</dbReference>
<dbReference type="InterPro" id="IPR001841">
    <property type="entry name" value="Znf_RING"/>
</dbReference>
<dbReference type="InterPro" id="IPR013083">
    <property type="entry name" value="Znf_RING/FYVE/PHD"/>
</dbReference>
<dbReference type="InterPro" id="IPR017907">
    <property type="entry name" value="Znf_RING_CS"/>
</dbReference>
<dbReference type="PANTHER" id="PTHR12930:SF0">
    <property type="entry name" value="RING FINGER PROTEIN 113B"/>
    <property type="match status" value="1"/>
</dbReference>
<dbReference type="PANTHER" id="PTHR12930">
    <property type="entry name" value="ZINC FINGER PROTEIN 183"/>
    <property type="match status" value="1"/>
</dbReference>
<dbReference type="Pfam" id="PF13920">
    <property type="entry name" value="zf-C3HC4_3"/>
    <property type="match status" value="1"/>
</dbReference>
<dbReference type="Pfam" id="PF00642">
    <property type="entry name" value="zf-CCCH"/>
    <property type="match status" value="1"/>
</dbReference>
<dbReference type="SMART" id="SM00184">
    <property type="entry name" value="RING"/>
    <property type="match status" value="1"/>
</dbReference>
<dbReference type="SMART" id="SM00356">
    <property type="entry name" value="ZnF_C3H1"/>
    <property type="match status" value="1"/>
</dbReference>
<dbReference type="SUPFAM" id="SSF90229">
    <property type="entry name" value="CCCH zinc finger"/>
    <property type="match status" value="1"/>
</dbReference>
<dbReference type="SUPFAM" id="SSF57850">
    <property type="entry name" value="RING/U-box"/>
    <property type="match status" value="1"/>
</dbReference>
<dbReference type="PROSITE" id="PS50103">
    <property type="entry name" value="ZF_C3H1"/>
    <property type="match status" value="1"/>
</dbReference>
<dbReference type="PROSITE" id="PS00518">
    <property type="entry name" value="ZF_RING_1"/>
    <property type="match status" value="1"/>
</dbReference>
<dbReference type="PROSITE" id="PS50089">
    <property type="entry name" value="ZF_RING_2"/>
    <property type="match status" value="1"/>
</dbReference>
<protein>
    <recommendedName>
        <fullName>E3 ubiquitin-protein ligase RNF113A</fullName>
        <ecNumber evidence="1">2.3.2.27</ecNumber>
    </recommendedName>
    <alternativeName>
        <fullName>RING finger protein 113A</fullName>
    </alternativeName>
    <alternativeName>
        <fullName>Zinc finger protein 183</fullName>
    </alternativeName>
</protein>
<evidence type="ECO:0000250" key="1">
    <source>
        <dbReference type="UniProtKB" id="O15541"/>
    </source>
</evidence>
<evidence type="ECO:0000255" key="2">
    <source>
        <dbReference type="PROSITE-ProRule" id="PRU00175"/>
    </source>
</evidence>
<evidence type="ECO:0000255" key="3">
    <source>
        <dbReference type="PROSITE-ProRule" id="PRU00723"/>
    </source>
</evidence>
<evidence type="ECO:0000256" key="4">
    <source>
        <dbReference type="SAM" id="MobiDB-lite"/>
    </source>
</evidence>
<evidence type="ECO:0000305" key="5"/>
<proteinExistence type="evidence at transcript level"/>
<organism>
    <name type="scientific">Bos taurus</name>
    <name type="common">Bovine</name>
    <dbReference type="NCBI Taxonomy" id="9913"/>
    <lineage>
        <taxon>Eukaryota</taxon>
        <taxon>Metazoa</taxon>
        <taxon>Chordata</taxon>
        <taxon>Craniata</taxon>
        <taxon>Vertebrata</taxon>
        <taxon>Euteleostomi</taxon>
        <taxon>Mammalia</taxon>
        <taxon>Eutheria</taxon>
        <taxon>Laurasiatheria</taxon>
        <taxon>Artiodactyla</taxon>
        <taxon>Ruminantia</taxon>
        <taxon>Pecora</taxon>
        <taxon>Bovidae</taxon>
        <taxon>Bovinae</taxon>
        <taxon>Bos</taxon>
    </lineage>
</organism>
<accession>Q67ER4</accession>
<accession>Q2HJ85</accession>
<gene>
    <name type="primary">RNF113A</name>
    <name type="synonym">ZNF183</name>
</gene>
<feature type="initiator methionine" description="Removed" evidence="1">
    <location>
        <position position="1"/>
    </location>
</feature>
<feature type="chain" id="PRO_0000056303" description="E3 ubiquitin-protein ligase RNF113A">
    <location>
        <begin position="2"/>
        <end position="343"/>
    </location>
</feature>
<feature type="zinc finger region" description="C3H1-type" evidence="3">
    <location>
        <begin position="196"/>
        <end position="224"/>
    </location>
</feature>
<feature type="zinc finger region" description="RING-type" evidence="2">
    <location>
        <begin position="262"/>
        <end position="300"/>
    </location>
</feature>
<feature type="region of interest" description="Important for interaction with SNRNP200/BRR2" evidence="1">
    <location>
        <begin position="2"/>
        <end position="60"/>
    </location>
</feature>
<feature type="region of interest" description="Disordered" evidence="4">
    <location>
        <begin position="23"/>
        <end position="95"/>
    </location>
</feature>
<feature type="region of interest" description="Important for interaction with CXCR4" evidence="1">
    <location>
        <begin position="50"/>
        <end position="61"/>
    </location>
</feature>
<feature type="region of interest" description="Disordered" evidence="4">
    <location>
        <begin position="323"/>
        <end position="343"/>
    </location>
</feature>
<feature type="compositionally biased region" description="Basic residues" evidence="4">
    <location>
        <begin position="23"/>
        <end position="34"/>
    </location>
</feature>
<feature type="compositionally biased region" description="Low complexity" evidence="4">
    <location>
        <begin position="39"/>
        <end position="50"/>
    </location>
</feature>
<feature type="compositionally biased region" description="Acidic residues" evidence="4">
    <location>
        <begin position="333"/>
        <end position="343"/>
    </location>
</feature>
<feature type="modified residue" description="N-acetylalanine" evidence="1">
    <location>
        <position position="2"/>
    </location>
</feature>
<feature type="modified residue" description="Phosphoserine" evidence="1">
    <location>
        <position position="6"/>
    </location>
</feature>
<feature type="modified residue" description="Phosphoserine" evidence="1">
    <location>
        <position position="84"/>
    </location>
</feature>
<feature type="modified residue" description="Phosphoserine" evidence="1">
    <location>
        <position position="85"/>
    </location>
</feature>
<feature type="modified residue" description="Phosphoserine" evidence="1">
    <location>
        <position position="253"/>
    </location>
</feature>
<feature type="sequence conflict" description="In Ref. 2; AAI13256." evidence="5" ref="2">
    <original>Q</original>
    <variation>K</variation>
    <location>
        <position position="147"/>
    </location>
</feature>